<proteinExistence type="inferred from homology"/>
<accession>A4IQI5</accession>
<gene>
    <name evidence="1" type="primary">spoIIAB</name>
    <name type="ordered locus">GTNG_2240</name>
</gene>
<evidence type="ECO:0000255" key="1">
    <source>
        <dbReference type="HAMAP-Rule" id="MF_00637"/>
    </source>
</evidence>
<dbReference type="EC" id="2.7.11.1" evidence="1"/>
<dbReference type="EMBL" id="CP000557">
    <property type="protein sequence ID" value="ABO67589.1"/>
    <property type="molecule type" value="Genomic_DNA"/>
</dbReference>
<dbReference type="RefSeq" id="WP_008879718.1">
    <property type="nucleotide sequence ID" value="NC_009328.1"/>
</dbReference>
<dbReference type="SMR" id="A4IQI5"/>
<dbReference type="GeneID" id="87623660"/>
<dbReference type="KEGG" id="gtn:GTNG_2240"/>
<dbReference type="eggNOG" id="COG2172">
    <property type="taxonomic scope" value="Bacteria"/>
</dbReference>
<dbReference type="HOGENOM" id="CLU_090336_11_0_9"/>
<dbReference type="Proteomes" id="UP000001578">
    <property type="component" value="Chromosome"/>
</dbReference>
<dbReference type="GO" id="GO:0005524">
    <property type="term" value="F:ATP binding"/>
    <property type="evidence" value="ECO:0007669"/>
    <property type="project" value="UniProtKB-KW"/>
</dbReference>
<dbReference type="GO" id="GO:0106310">
    <property type="term" value="F:protein serine kinase activity"/>
    <property type="evidence" value="ECO:0007669"/>
    <property type="project" value="RHEA"/>
</dbReference>
<dbReference type="GO" id="GO:0004674">
    <property type="term" value="F:protein serine/threonine kinase activity"/>
    <property type="evidence" value="ECO:0007669"/>
    <property type="project" value="UniProtKB-KW"/>
</dbReference>
<dbReference type="GO" id="GO:0016989">
    <property type="term" value="F:sigma factor antagonist activity"/>
    <property type="evidence" value="ECO:0007669"/>
    <property type="project" value="InterPro"/>
</dbReference>
<dbReference type="GO" id="GO:0030436">
    <property type="term" value="P:asexual sporulation"/>
    <property type="evidence" value="ECO:0007669"/>
    <property type="project" value="UniProtKB-UniRule"/>
</dbReference>
<dbReference type="GO" id="GO:0042174">
    <property type="term" value="P:negative regulation of sporulation resulting in formation of a cellular spore"/>
    <property type="evidence" value="ECO:0007669"/>
    <property type="project" value="InterPro"/>
</dbReference>
<dbReference type="GO" id="GO:0030435">
    <property type="term" value="P:sporulation resulting in formation of a cellular spore"/>
    <property type="evidence" value="ECO:0007669"/>
    <property type="project" value="UniProtKB-KW"/>
</dbReference>
<dbReference type="CDD" id="cd16942">
    <property type="entry name" value="HATPase_SpoIIAB-like"/>
    <property type="match status" value="1"/>
</dbReference>
<dbReference type="Gene3D" id="3.30.565.10">
    <property type="entry name" value="Histidine kinase-like ATPase, C-terminal domain"/>
    <property type="match status" value="1"/>
</dbReference>
<dbReference type="HAMAP" id="MF_00637">
    <property type="entry name" value="Anti_sigma_F"/>
    <property type="match status" value="1"/>
</dbReference>
<dbReference type="InterPro" id="IPR050267">
    <property type="entry name" value="Anti-sigma-factor_SerPK"/>
</dbReference>
<dbReference type="InterPro" id="IPR010194">
    <property type="entry name" value="Anti-sigma_F"/>
</dbReference>
<dbReference type="InterPro" id="IPR036890">
    <property type="entry name" value="HATPase_C_sf"/>
</dbReference>
<dbReference type="NCBIfam" id="TIGR01925">
    <property type="entry name" value="spIIAB"/>
    <property type="match status" value="1"/>
</dbReference>
<dbReference type="PANTHER" id="PTHR35526:SF3">
    <property type="entry name" value="ANTI-SIGMA-F FACTOR RSBW"/>
    <property type="match status" value="1"/>
</dbReference>
<dbReference type="PANTHER" id="PTHR35526">
    <property type="entry name" value="ANTI-SIGMA-F FACTOR RSBW-RELATED"/>
    <property type="match status" value="1"/>
</dbReference>
<dbReference type="Pfam" id="PF13581">
    <property type="entry name" value="HATPase_c_2"/>
    <property type="match status" value="1"/>
</dbReference>
<dbReference type="SMART" id="SM00387">
    <property type="entry name" value="HATPase_c"/>
    <property type="match status" value="1"/>
</dbReference>
<dbReference type="SUPFAM" id="SSF55874">
    <property type="entry name" value="ATPase domain of HSP90 chaperone/DNA topoisomerase II/histidine kinase"/>
    <property type="match status" value="1"/>
</dbReference>
<sequence>MRNEMHLQFSARSENESFARVTVAAFVAQLDPTIDELTEIKTVVSEAVTNAIIHGYNNDPNGIVFISVVIEDGIVHLTVRDEGVGIANIDEARQPLFTTKPELERSGMGFTIMENFMDEVVVESEVNKGTTVYLKKHIAKSKALCN</sequence>
<organism>
    <name type="scientific">Geobacillus thermodenitrificans (strain NG80-2)</name>
    <dbReference type="NCBI Taxonomy" id="420246"/>
    <lineage>
        <taxon>Bacteria</taxon>
        <taxon>Bacillati</taxon>
        <taxon>Bacillota</taxon>
        <taxon>Bacilli</taxon>
        <taxon>Bacillales</taxon>
        <taxon>Anoxybacillaceae</taxon>
        <taxon>Geobacillus</taxon>
    </lineage>
</organism>
<feature type="chain" id="PRO_0000301414" description="Anti-sigma F factor">
    <location>
        <begin position="1"/>
        <end position="146"/>
    </location>
</feature>
<keyword id="KW-0067">ATP-binding</keyword>
<keyword id="KW-0418">Kinase</keyword>
<keyword id="KW-0547">Nucleotide-binding</keyword>
<keyword id="KW-0723">Serine/threonine-protein kinase</keyword>
<keyword id="KW-0749">Sporulation</keyword>
<keyword id="KW-0808">Transferase</keyword>
<comment type="function">
    <text evidence="1">Binds to sigma F and blocks its ability to form an RNA polymerase holoenzyme (E-sigma F). Phosphorylates SpoIIAA on a serine residue. This phosphorylation may enable SpoIIAA to act as an anti-anti-sigma factor that counteracts SpoIIAB and thus releases sigma F from inhibition.</text>
</comment>
<comment type="catalytic activity">
    <reaction evidence="1">
        <text>L-seryl-[protein] + ATP = O-phospho-L-seryl-[protein] + ADP + H(+)</text>
        <dbReference type="Rhea" id="RHEA:17989"/>
        <dbReference type="Rhea" id="RHEA-COMP:9863"/>
        <dbReference type="Rhea" id="RHEA-COMP:11604"/>
        <dbReference type="ChEBI" id="CHEBI:15378"/>
        <dbReference type="ChEBI" id="CHEBI:29999"/>
        <dbReference type="ChEBI" id="CHEBI:30616"/>
        <dbReference type="ChEBI" id="CHEBI:83421"/>
        <dbReference type="ChEBI" id="CHEBI:456216"/>
        <dbReference type="EC" id="2.7.11.1"/>
    </reaction>
</comment>
<comment type="catalytic activity">
    <reaction evidence="1">
        <text>L-threonyl-[protein] + ATP = O-phospho-L-threonyl-[protein] + ADP + H(+)</text>
        <dbReference type="Rhea" id="RHEA:46608"/>
        <dbReference type="Rhea" id="RHEA-COMP:11060"/>
        <dbReference type="Rhea" id="RHEA-COMP:11605"/>
        <dbReference type="ChEBI" id="CHEBI:15378"/>
        <dbReference type="ChEBI" id="CHEBI:30013"/>
        <dbReference type="ChEBI" id="CHEBI:30616"/>
        <dbReference type="ChEBI" id="CHEBI:61977"/>
        <dbReference type="ChEBI" id="CHEBI:456216"/>
        <dbReference type="EC" id="2.7.11.1"/>
    </reaction>
</comment>
<comment type="similarity">
    <text evidence="1">Belongs to the anti-sigma-factor family.</text>
</comment>
<reference key="1">
    <citation type="journal article" date="2007" name="Proc. Natl. Acad. Sci. U.S.A.">
        <title>Genome and proteome of long-chain alkane degrading Geobacillus thermodenitrificans NG80-2 isolated from a deep-subsurface oil reservoir.</title>
        <authorList>
            <person name="Feng L."/>
            <person name="Wang W."/>
            <person name="Cheng J."/>
            <person name="Ren Y."/>
            <person name="Zhao G."/>
            <person name="Gao C."/>
            <person name="Tang Y."/>
            <person name="Liu X."/>
            <person name="Han W."/>
            <person name="Peng X."/>
            <person name="Liu R."/>
            <person name="Wang L."/>
        </authorList>
    </citation>
    <scope>NUCLEOTIDE SEQUENCE [LARGE SCALE GENOMIC DNA]</scope>
    <source>
        <strain>NG80-2</strain>
    </source>
</reference>
<protein>
    <recommendedName>
        <fullName evidence="1">Anti-sigma F factor</fullName>
        <ecNumber evidence="1">2.7.11.1</ecNumber>
    </recommendedName>
    <alternativeName>
        <fullName evidence="1">Stage II sporulation protein AB</fullName>
    </alternativeName>
</protein>
<name>SP2AB_GEOTN</name>